<gene>
    <name evidence="1" type="primary">rplI</name>
    <name type="ordered locus">Caul_2510</name>
</gene>
<name>RL9_CAUSK</name>
<organism>
    <name type="scientific">Caulobacter sp. (strain K31)</name>
    <dbReference type="NCBI Taxonomy" id="366602"/>
    <lineage>
        <taxon>Bacteria</taxon>
        <taxon>Pseudomonadati</taxon>
        <taxon>Pseudomonadota</taxon>
        <taxon>Alphaproteobacteria</taxon>
        <taxon>Caulobacterales</taxon>
        <taxon>Caulobacteraceae</taxon>
        <taxon>Caulobacter</taxon>
    </lineage>
</organism>
<evidence type="ECO:0000255" key="1">
    <source>
        <dbReference type="HAMAP-Rule" id="MF_00503"/>
    </source>
</evidence>
<evidence type="ECO:0000256" key="2">
    <source>
        <dbReference type="SAM" id="MobiDB-lite"/>
    </source>
</evidence>
<evidence type="ECO:0000305" key="3"/>
<protein>
    <recommendedName>
        <fullName evidence="1">Large ribosomal subunit protein bL9</fullName>
    </recommendedName>
    <alternativeName>
        <fullName evidence="3">50S ribosomal protein L9</fullName>
    </alternativeName>
</protein>
<keyword id="KW-0687">Ribonucleoprotein</keyword>
<keyword id="KW-0689">Ribosomal protein</keyword>
<keyword id="KW-0694">RNA-binding</keyword>
<keyword id="KW-0699">rRNA-binding</keyword>
<proteinExistence type="inferred from homology"/>
<accession>B0SWK9</accession>
<dbReference type="EMBL" id="CP000927">
    <property type="protein sequence ID" value="ABZ71637.1"/>
    <property type="molecule type" value="Genomic_DNA"/>
</dbReference>
<dbReference type="SMR" id="B0SWK9"/>
<dbReference type="STRING" id="366602.Caul_2510"/>
<dbReference type="KEGG" id="cak:Caul_2510"/>
<dbReference type="eggNOG" id="COG0359">
    <property type="taxonomic scope" value="Bacteria"/>
</dbReference>
<dbReference type="HOGENOM" id="CLU_078938_1_0_5"/>
<dbReference type="OrthoDB" id="9788336at2"/>
<dbReference type="GO" id="GO:1990904">
    <property type="term" value="C:ribonucleoprotein complex"/>
    <property type="evidence" value="ECO:0007669"/>
    <property type="project" value="UniProtKB-KW"/>
</dbReference>
<dbReference type="GO" id="GO:0005840">
    <property type="term" value="C:ribosome"/>
    <property type="evidence" value="ECO:0007669"/>
    <property type="project" value="UniProtKB-KW"/>
</dbReference>
<dbReference type="GO" id="GO:0019843">
    <property type="term" value="F:rRNA binding"/>
    <property type="evidence" value="ECO:0007669"/>
    <property type="project" value="UniProtKB-UniRule"/>
</dbReference>
<dbReference type="GO" id="GO:0003735">
    <property type="term" value="F:structural constituent of ribosome"/>
    <property type="evidence" value="ECO:0007669"/>
    <property type="project" value="InterPro"/>
</dbReference>
<dbReference type="GO" id="GO:0006412">
    <property type="term" value="P:translation"/>
    <property type="evidence" value="ECO:0007669"/>
    <property type="project" value="UniProtKB-UniRule"/>
</dbReference>
<dbReference type="Gene3D" id="3.10.430.100">
    <property type="entry name" value="Ribosomal protein L9, C-terminal domain"/>
    <property type="match status" value="1"/>
</dbReference>
<dbReference type="Gene3D" id="3.40.5.10">
    <property type="entry name" value="Ribosomal protein L9, N-terminal domain"/>
    <property type="match status" value="1"/>
</dbReference>
<dbReference type="HAMAP" id="MF_00503">
    <property type="entry name" value="Ribosomal_bL9"/>
    <property type="match status" value="1"/>
</dbReference>
<dbReference type="InterPro" id="IPR000244">
    <property type="entry name" value="Ribosomal_bL9"/>
</dbReference>
<dbReference type="InterPro" id="IPR009027">
    <property type="entry name" value="Ribosomal_bL9/RNase_H1_N"/>
</dbReference>
<dbReference type="InterPro" id="IPR020594">
    <property type="entry name" value="Ribosomal_bL9_bac/chp"/>
</dbReference>
<dbReference type="InterPro" id="IPR020069">
    <property type="entry name" value="Ribosomal_bL9_C"/>
</dbReference>
<dbReference type="InterPro" id="IPR036791">
    <property type="entry name" value="Ribosomal_bL9_C_sf"/>
</dbReference>
<dbReference type="InterPro" id="IPR020070">
    <property type="entry name" value="Ribosomal_bL9_N"/>
</dbReference>
<dbReference type="InterPro" id="IPR036935">
    <property type="entry name" value="Ribosomal_bL9_N_sf"/>
</dbReference>
<dbReference type="NCBIfam" id="TIGR00158">
    <property type="entry name" value="L9"/>
    <property type="match status" value="1"/>
</dbReference>
<dbReference type="PANTHER" id="PTHR21368">
    <property type="entry name" value="50S RIBOSOMAL PROTEIN L9"/>
    <property type="match status" value="1"/>
</dbReference>
<dbReference type="Pfam" id="PF03948">
    <property type="entry name" value="Ribosomal_L9_C"/>
    <property type="match status" value="1"/>
</dbReference>
<dbReference type="Pfam" id="PF01281">
    <property type="entry name" value="Ribosomal_L9_N"/>
    <property type="match status" value="1"/>
</dbReference>
<dbReference type="SUPFAM" id="SSF55658">
    <property type="entry name" value="L9 N-domain-like"/>
    <property type="match status" value="1"/>
</dbReference>
<dbReference type="SUPFAM" id="SSF55653">
    <property type="entry name" value="Ribosomal protein L9 C-domain"/>
    <property type="match status" value="1"/>
</dbReference>
<dbReference type="PROSITE" id="PS00651">
    <property type="entry name" value="RIBOSOMAL_L9"/>
    <property type="match status" value="1"/>
</dbReference>
<reference key="1">
    <citation type="submission" date="2008-01" db="EMBL/GenBank/DDBJ databases">
        <title>Complete sequence of chromosome of Caulobacter sp. K31.</title>
        <authorList>
            <consortium name="US DOE Joint Genome Institute"/>
            <person name="Copeland A."/>
            <person name="Lucas S."/>
            <person name="Lapidus A."/>
            <person name="Barry K."/>
            <person name="Glavina del Rio T."/>
            <person name="Dalin E."/>
            <person name="Tice H."/>
            <person name="Pitluck S."/>
            <person name="Bruce D."/>
            <person name="Goodwin L."/>
            <person name="Thompson L.S."/>
            <person name="Brettin T."/>
            <person name="Detter J.C."/>
            <person name="Han C."/>
            <person name="Schmutz J."/>
            <person name="Larimer F."/>
            <person name="Land M."/>
            <person name="Hauser L."/>
            <person name="Kyrpides N."/>
            <person name="Kim E."/>
            <person name="Stephens C."/>
            <person name="Richardson P."/>
        </authorList>
    </citation>
    <scope>NUCLEOTIDE SEQUENCE [LARGE SCALE GENOMIC DNA]</scope>
    <source>
        <strain>K31</strain>
    </source>
</reference>
<sequence>MKVILLERVEGTGVLGDVVTVKDGFARNFLLPRHKALRANSANLKSFEVQRAEIEARNVKNREAAGKSGEGLDGKQYVMIRQAGESGQLYGSVAGRDVADAIKAEGGKVDRSMIVLDKPIKTLGVHEVKVKLHAEVTVTVTLNIARSQDEADRQARGENVVAAQFEEDRAAEAEAASDMAAGGAGSFEGDHYES</sequence>
<comment type="function">
    <text evidence="1">Binds to the 23S rRNA.</text>
</comment>
<comment type="similarity">
    <text evidence="1">Belongs to the bacterial ribosomal protein bL9 family.</text>
</comment>
<feature type="chain" id="PRO_1000081468" description="Large ribosomal subunit protein bL9">
    <location>
        <begin position="1"/>
        <end position="194"/>
    </location>
</feature>
<feature type="region of interest" description="Disordered" evidence="2">
    <location>
        <begin position="167"/>
        <end position="194"/>
    </location>
</feature>